<name>MSCL_BACAN</name>
<accession>Q81KR6</accession>
<accession>Q6HS72</accession>
<accession>Q6KLH1</accession>
<organism>
    <name type="scientific">Bacillus anthracis</name>
    <dbReference type="NCBI Taxonomy" id="1392"/>
    <lineage>
        <taxon>Bacteria</taxon>
        <taxon>Bacillati</taxon>
        <taxon>Bacillota</taxon>
        <taxon>Bacilli</taxon>
        <taxon>Bacillales</taxon>
        <taxon>Bacillaceae</taxon>
        <taxon>Bacillus</taxon>
        <taxon>Bacillus cereus group</taxon>
    </lineage>
</organism>
<evidence type="ECO:0000255" key="1">
    <source>
        <dbReference type="HAMAP-Rule" id="MF_00115"/>
    </source>
</evidence>
<proteinExistence type="inferred from homology"/>
<sequence length="132" mass="14811">MWNEFKKFAFKGNVIDLAVGVVIGAAFGKIVSSLVKDIITPLLGMVLGGVDFTDLKITFGKSSIMYGNFIQTIFDFLIIAAAIFMFVKVFNKLTSKREEEKEEEIPEPTKEEELLGEIRDLLKQQNSSKDRA</sequence>
<reference key="1">
    <citation type="journal article" date="2003" name="Nature">
        <title>The genome sequence of Bacillus anthracis Ames and comparison to closely related bacteria.</title>
        <authorList>
            <person name="Read T.D."/>
            <person name="Peterson S.N."/>
            <person name="Tourasse N.J."/>
            <person name="Baillie L.W."/>
            <person name="Paulsen I.T."/>
            <person name="Nelson K.E."/>
            <person name="Tettelin H."/>
            <person name="Fouts D.E."/>
            <person name="Eisen J.A."/>
            <person name="Gill S.R."/>
            <person name="Holtzapple E.K."/>
            <person name="Okstad O.A."/>
            <person name="Helgason E."/>
            <person name="Rilstone J."/>
            <person name="Wu M."/>
            <person name="Kolonay J.F."/>
            <person name="Beanan M.J."/>
            <person name="Dodson R.J."/>
            <person name="Brinkac L.M."/>
            <person name="Gwinn M.L."/>
            <person name="DeBoy R.T."/>
            <person name="Madpu R."/>
            <person name="Daugherty S.C."/>
            <person name="Durkin A.S."/>
            <person name="Haft D.H."/>
            <person name="Nelson W.C."/>
            <person name="Peterson J.D."/>
            <person name="Pop M."/>
            <person name="Khouri H.M."/>
            <person name="Radune D."/>
            <person name="Benton J.L."/>
            <person name="Mahamoud Y."/>
            <person name="Jiang L."/>
            <person name="Hance I.R."/>
            <person name="Weidman J.F."/>
            <person name="Berry K.J."/>
            <person name="Plaut R.D."/>
            <person name="Wolf A.M."/>
            <person name="Watkins K.L."/>
            <person name="Nierman W.C."/>
            <person name="Hazen A."/>
            <person name="Cline R.T."/>
            <person name="Redmond C."/>
            <person name="Thwaite J.E."/>
            <person name="White O."/>
            <person name="Salzberg S.L."/>
            <person name="Thomason B."/>
            <person name="Friedlander A.M."/>
            <person name="Koehler T.M."/>
            <person name="Hanna P.C."/>
            <person name="Kolstoe A.-B."/>
            <person name="Fraser C.M."/>
        </authorList>
    </citation>
    <scope>NUCLEOTIDE SEQUENCE [LARGE SCALE GENOMIC DNA]</scope>
    <source>
        <strain>Ames / isolate Porton</strain>
    </source>
</reference>
<reference key="2">
    <citation type="journal article" date="2009" name="J. Bacteriol.">
        <title>The complete genome sequence of Bacillus anthracis Ames 'Ancestor'.</title>
        <authorList>
            <person name="Ravel J."/>
            <person name="Jiang L."/>
            <person name="Stanley S.T."/>
            <person name="Wilson M.R."/>
            <person name="Decker R.S."/>
            <person name="Read T.D."/>
            <person name="Worsham P."/>
            <person name="Keim P.S."/>
            <person name="Salzberg S.L."/>
            <person name="Fraser-Liggett C.M."/>
            <person name="Rasko D.A."/>
        </authorList>
    </citation>
    <scope>NUCLEOTIDE SEQUENCE [LARGE SCALE GENOMIC DNA]</scope>
    <source>
        <strain>Ames ancestor</strain>
    </source>
</reference>
<reference key="3">
    <citation type="submission" date="2004-01" db="EMBL/GenBank/DDBJ databases">
        <title>Complete genome sequence of Bacillus anthracis Sterne.</title>
        <authorList>
            <person name="Brettin T.S."/>
            <person name="Bruce D."/>
            <person name="Challacombe J.F."/>
            <person name="Gilna P."/>
            <person name="Han C."/>
            <person name="Hill K."/>
            <person name="Hitchcock P."/>
            <person name="Jackson P."/>
            <person name="Keim P."/>
            <person name="Longmire J."/>
            <person name="Lucas S."/>
            <person name="Okinaka R."/>
            <person name="Richardson P."/>
            <person name="Rubin E."/>
            <person name="Tice H."/>
        </authorList>
    </citation>
    <scope>NUCLEOTIDE SEQUENCE [LARGE SCALE GENOMIC DNA]</scope>
    <source>
        <strain>Sterne</strain>
    </source>
</reference>
<feature type="chain" id="PRO_0000237969" description="Large-conductance mechanosensitive channel">
    <location>
        <begin position="1"/>
        <end position="132"/>
    </location>
</feature>
<feature type="transmembrane region" description="Helical" evidence="1">
    <location>
        <begin position="14"/>
        <end position="34"/>
    </location>
</feature>
<feature type="transmembrane region" description="Helical" evidence="1">
    <location>
        <begin position="67"/>
        <end position="87"/>
    </location>
</feature>
<keyword id="KW-1003">Cell membrane</keyword>
<keyword id="KW-0407">Ion channel</keyword>
<keyword id="KW-0406">Ion transport</keyword>
<keyword id="KW-0472">Membrane</keyword>
<keyword id="KW-1185">Reference proteome</keyword>
<keyword id="KW-0812">Transmembrane</keyword>
<keyword id="KW-1133">Transmembrane helix</keyword>
<keyword id="KW-0813">Transport</keyword>
<protein>
    <recommendedName>
        <fullName evidence="1">Large-conductance mechanosensitive channel</fullName>
    </recommendedName>
</protein>
<comment type="function">
    <text evidence="1">Channel that opens in response to stretch forces in the membrane lipid bilayer. May participate in the regulation of osmotic pressure changes within the cell.</text>
</comment>
<comment type="subunit">
    <text evidence="1">Homopentamer.</text>
</comment>
<comment type="subcellular location">
    <subcellularLocation>
        <location evidence="1">Cell membrane</location>
        <topology evidence="1">Multi-pass membrane protein</topology>
    </subcellularLocation>
</comment>
<comment type="similarity">
    <text evidence="1">Belongs to the MscL family.</text>
</comment>
<gene>
    <name evidence="1" type="primary">mscL</name>
    <name type="ordered locus">BA_4924</name>
    <name type="ordered locus">GBAA_4924</name>
    <name type="ordered locus">BAS4569</name>
</gene>
<dbReference type="EMBL" id="AE016879">
    <property type="protein sequence ID" value="AAP28608.1"/>
    <property type="molecule type" value="Genomic_DNA"/>
</dbReference>
<dbReference type="EMBL" id="AE017334">
    <property type="protein sequence ID" value="AAT34042.1"/>
    <property type="molecule type" value="Genomic_DNA"/>
</dbReference>
<dbReference type="EMBL" id="AE017225">
    <property type="protein sequence ID" value="AAT56866.1"/>
    <property type="molecule type" value="Genomic_DNA"/>
</dbReference>
<dbReference type="RefSeq" id="NP_847122.1">
    <property type="nucleotide sequence ID" value="NC_003997.3"/>
</dbReference>
<dbReference type="RefSeq" id="WP_000267001.1">
    <property type="nucleotide sequence ID" value="NZ_WXXJ01000026.1"/>
</dbReference>
<dbReference type="RefSeq" id="YP_030816.1">
    <property type="nucleotide sequence ID" value="NC_005945.1"/>
</dbReference>
<dbReference type="SMR" id="Q81KR6"/>
<dbReference type="STRING" id="261594.GBAA_4924"/>
<dbReference type="DNASU" id="1084114"/>
<dbReference type="GeneID" id="45024544"/>
<dbReference type="KEGG" id="ban:BA_4924"/>
<dbReference type="KEGG" id="bar:GBAA_4924"/>
<dbReference type="KEGG" id="bat:BAS4569"/>
<dbReference type="PATRIC" id="fig|198094.11.peg.4885"/>
<dbReference type="eggNOG" id="COG1970">
    <property type="taxonomic scope" value="Bacteria"/>
</dbReference>
<dbReference type="HOGENOM" id="CLU_095787_0_0_9"/>
<dbReference type="OMA" id="FKTFAMR"/>
<dbReference type="OrthoDB" id="9810350at2"/>
<dbReference type="Proteomes" id="UP000000427">
    <property type="component" value="Chromosome"/>
</dbReference>
<dbReference type="Proteomes" id="UP000000594">
    <property type="component" value="Chromosome"/>
</dbReference>
<dbReference type="GO" id="GO:0005886">
    <property type="term" value="C:plasma membrane"/>
    <property type="evidence" value="ECO:0007669"/>
    <property type="project" value="UniProtKB-SubCell"/>
</dbReference>
<dbReference type="GO" id="GO:0008381">
    <property type="term" value="F:mechanosensitive monoatomic ion channel activity"/>
    <property type="evidence" value="ECO:0007669"/>
    <property type="project" value="UniProtKB-UniRule"/>
</dbReference>
<dbReference type="FunFam" id="1.10.1200.120:FF:000001">
    <property type="entry name" value="Large-conductance mechanosensitive channel"/>
    <property type="match status" value="1"/>
</dbReference>
<dbReference type="Gene3D" id="1.10.1200.120">
    <property type="entry name" value="Large-conductance mechanosensitive channel, MscL, domain 1"/>
    <property type="match status" value="1"/>
</dbReference>
<dbReference type="HAMAP" id="MF_00115">
    <property type="entry name" value="MscL"/>
    <property type="match status" value="1"/>
</dbReference>
<dbReference type="InterPro" id="IPR019823">
    <property type="entry name" value="Mechanosensitive_channel_CS"/>
</dbReference>
<dbReference type="InterPro" id="IPR001185">
    <property type="entry name" value="MS_channel"/>
</dbReference>
<dbReference type="InterPro" id="IPR037673">
    <property type="entry name" value="MSC/AndL"/>
</dbReference>
<dbReference type="InterPro" id="IPR036019">
    <property type="entry name" value="MscL_channel"/>
</dbReference>
<dbReference type="NCBIfam" id="TIGR00220">
    <property type="entry name" value="mscL"/>
    <property type="match status" value="1"/>
</dbReference>
<dbReference type="NCBIfam" id="NF001843">
    <property type="entry name" value="PRK00567.1-4"/>
    <property type="match status" value="1"/>
</dbReference>
<dbReference type="NCBIfam" id="NF010560">
    <property type="entry name" value="PRK13955.1"/>
    <property type="match status" value="1"/>
</dbReference>
<dbReference type="PANTHER" id="PTHR30266:SF2">
    <property type="entry name" value="LARGE-CONDUCTANCE MECHANOSENSITIVE CHANNEL"/>
    <property type="match status" value="1"/>
</dbReference>
<dbReference type="PANTHER" id="PTHR30266">
    <property type="entry name" value="MECHANOSENSITIVE CHANNEL MSCL"/>
    <property type="match status" value="1"/>
</dbReference>
<dbReference type="Pfam" id="PF01741">
    <property type="entry name" value="MscL"/>
    <property type="match status" value="1"/>
</dbReference>
<dbReference type="PRINTS" id="PR01264">
    <property type="entry name" value="MECHCHANNEL"/>
</dbReference>
<dbReference type="SUPFAM" id="SSF81330">
    <property type="entry name" value="Gated mechanosensitive channel"/>
    <property type="match status" value="1"/>
</dbReference>
<dbReference type="PROSITE" id="PS01327">
    <property type="entry name" value="MSCL"/>
    <property type="match status" value="1"/>
</dbReference>